<keyword id="KW-0067">ATP-binding</keyword>
<keyword id="KW-0315">Glutamine amidotransferase</keyword>
<keyword id="KW-0436">Ligase</keyword>
<keyword id="KW-0460">Magnesium</keyword>
<keyword id="KW-0479">Metal-binding</keyword>
<keyword id="KW-0547">Nucleotide-binding</keyword>
<keyword id="KW-0665">Pyrimidine biosynthesis</keyword>
<keyword id="KW-1185">Reference proteome</keyword>
<name>PYRG_PHOLL</name>
<organism>
    <name type="scientific">Photorhabdus laumondii subsp. laumondii (strain DSM 15139 / CIP 105565 / TT01)</name>
    <name type="common">Photorhabdus luminescens subsp. laumondii</name>
    <dbReference type="NCBI Taxonomy" id="243265"/>
    <lineage>
        <taxon>Bacteria</taxon>
        <taxon>Pseudomonadati</taxon>
        <taxon>Pseudomonadota</taxon>
        <taxon>Gammaproteobacteria</taxon>
        <taxon>Enterobacterales</taxon>
        <taxon>Morganellaceae</taxon>
        <taxon>Photorhabdus</taxon>
    </lineage>
</organism>
<feature type="chain" id="PRO_0000266173" description="CTP synthase">
    <location>
        <begin position="1"/>
        <end position="545"/>
    </location>
</feature>
<feature type="domain" description="Glutamine amidotransferase type-1" evidence="1">
    <location>
        <begin position="291"/>
        <end position="542"/>
    </location>
</feature>
<feature type="region of interest" description="Amidoligase domain" evidence="1">
    <location>
        <begin position="1"/>
        <end position="266"/>
    </location>
</feature>
<feature type="active site" description="Nucleophile; for glutamine hydrolysis" evidence="1">
    <location>
        <position position="379"/>
    </location>
</feature>
<feature type="active site" evidence="1">
    <location>
        <position position="515"/>
    </location>
</feature>
<feature type="active site" evidence="1">
    <location>
        <position position="517"/>
    </location>
</feature>
<feature type="binding site" evidence="1">
    <location>
        <position position="14"/>
    </location>
    <ligand>
        <name>CTP</name>
        <dbReference type="ChEBI" id="CHEBI:37563"/>
        <note>allosteric inhibitor</note>
    </ligand>
</feature>
<feature type="binding site" evidence="1">
    <location>
        <position position="14"/>
    </location>
    <ligand>
        <name>UTP</name>
        <dbReference type="ChEBI" id="CHEBI:46398"/>
    </ligand>
</feature>
<feature type="binding site" evidence="1">
    <location>
        <begin position="15"/>
        <end position="20"/>
    </location>
    <ligand>
        <name>ATP</name>
        <dbReference type="ChEBI" id="CHEBI:30616"/>
    </ligand>
</feature>
<feature type="binding site" evidence="1">
    <location>
        <position position="72"/>
    </location>
    <ligand>
        <name>ATP</name>
        <dbReference type="ChEBI" id="CHEBI:30616"/>
    </ligand>
</feature>
<feature type="binding site" evidence="1">
    <location>
        <position position="72"/>
    </location>
    <ligand>
        <name>Mg(2+)</name>
        <dbReference type="ChEBI" id="CHEBI:18420"/>
    </ligand>
</feature>
<feature type="binding site" evidence="1">
    <location>
        <position position="140"/>
    </location>
    <ligand>
        <name>Mg(2+)</name>
        <dbReference type="ChEBI" id="CHEBI:18420"/>
    </ligand>
</feature>
<feature type="binding site" evidence="1">
    <location>
        <begin position="147"/>
        <end position="149"/>
    </location>
    <ligand>
        <name>CTP</name>
        <dbReference type="ChEBI" id="CHEBI:37563"/>
        <note>allosteric inhibitor</note>
    </ligand>
</feature>
<feature type="binding site" evidence="1">
    <location>
        <begin position="187"/>
        <end position="192"/>
    </location>
    <ligand>
        <name>CTP</name>
        <dbReference type="ChEBI" id="CHEBI:37563"/>
        <note>allosteric inhibitor</note>
    </ligand>
</feature>
<feature type="binding site" evidence="1">
    <location>
        <begin position="187"/>
        <end position="192"/>
    </location>
    <ligand>
        <name>UTP</name>
        <dbReference type="ChEBI" id="CHEBI:46398"/>
    </ligand>
</feature>
<feature type="binding site" evidence="1">
    <location>
        <position position="223"/>
    </location>
    <ligand>
        <name>CTP</name>
        <dbReference type="ChEBI" id="CHEBI:37563"/>
        <note>allosteric inhibitor</note>
    </ligand>
</feature>
<feature type="binding site" evidence="1">
    <location>
        <position position="223"/>
    </location>
    <ligand>
        <name>UTP</name>
        <dbReference type="ChEBI" id="CHEBI:46398"/>
    </ligand>
</feature>
<feature type="binding site" evidence="1">
    <location>
        <begin position="239"/>
        <end position="241"/>
    </location>
    <ligand>
        <name>ATP</name>
        <dbReference type="ChEBI" id="CHEBI:30616"/>
    </ligand>
</feature>
<feature type="binding site" evidence="1">
    <location>
        <position position="352"/>
    </location>
    <ligand>
        <name>L-glutamine</name>
        <dbReference type="ChEBI" id="CHEBI:58359"/>
    </ligand>
</feature>
<feature type="binding site" evidence="1">
    <location>
        <begin position="380"/>
        <end position="383"/>
    </location>
    <ligand>
        <name>L-glutamine</name>
        <dbReference type="ChEBI" id="CHEBI:58359"/>
    </ligand>
</feature>
<feature type="binding site" evidence="1">
    <location>
        <position position="403"/>
    </location>
    <ligand>
        <name>L-glutamine</name>
        <dbReference type="ChEBI" id="CHEBI:58359"/>
    </ligand>
</feature>
<feature type="binding site" evidence="1">
    <location>
        <position position="470"/>
    </location>
    <ligand>
        <name>L-glutamine</name>
        <dbReference type="ChEBI" id="CHEBI:58359"/>
    </ligand>
</feature>
<evidence type="ECO:0000255" key="1">
    <source>
        <dbReference type="HAMAP-Rule" id="MF_01227"/>
    </source>
</evidence>
<sequence>MKTNYIFVTGGVVSSLGKGIAAASLAAILEARGLNVTIMKLDPYINVDPGTMSPIQHGEVFVTEDGAETDLDLGHYERFIRTKMTRRNNFTTGRVYSEVLRKERRGDYLGATVQVIPHITNEIKDRIISGGEGHDVVLVEVGGTVGDIESLPFLEAIRQMAVEVGREHTLYLHLTLVPYLAAAGEVKTKPTQHSVKELLSIGIQPDILICRSDRVIPANERAKIALFCNVPEKAVISLKDVDSIYKIPGLLKSQGLDDYICKRFSLDCPEANLSEWEQVIYEEANPSGEVTIGMVGKYVELPDAYKSVIEALKHGGLKNRLTVNIKLLDSQDVETRGVELLKGLDAILVPGGFGGRGVEGKIMTARYARENNIPYLGICLGMQVALIEFSRHVAGLEKASSTEFEPDCRLPVVGLITEWRDEDGNLEVRSEESDLGGTMRVGGQPCHLTKDSLVRTLYGADTIVERHRHRYEVNNLLLKRIEDAGLRVAGRSVDNKLVEIIEIPDHPWFVACQFHPEFTSTPRDGHPLFTGFVKAAGKYQKGQLK</sequence>
<gene>
    <name evidence="1" type="primary">pyrG</name>
    <name type="ordered locus">plu0912</name>
</gene>
<accession>Q7N836</accession>
<protein>
    <recommendedName>
        <fullName evidence="1">CTP synthase</fullName>
        <ecNumber evidence="1">6.3.4.2</ecNumber>
    </recommendedName>
    <alternativeName>
        <fullName evidence="1">Cytidine 5'-triphosphate synthase</fullName>
    </alternativeName>
    <alternativeName>
        <fullName evidence="1">Cytidine triphosphate synthetase</fullName>
        <shortName evidence="1">CTP synthetase</shortName>
        <shortName evidence="1">CTPS</shortName>
    </alternativeName>
    <alternativeName>
        <fullName evidence="1">UTP--ammonia ligase</fullName>
    </alternativeName>
</protein>
<comment type="function">
    <text evidence="1">Catalyzes the ATP-dependent amination of UTP to CTP with either L-glutamine or ammonia as the source of nitrogen. Regulates intracellular CTP levels through interactions with the four ribonucleotide triphosphates.</text>
</comment>
<comment type="catalytic activity">
    <reaction evidence="1">
        <text>UTP + L-glutamine + ATP + H2O = CTP + L-glutamate + ADP + phosphate + 2 H(+)</text>
        <dbReference type="Rhea" id="RHEA:26426"/>
        <dbReference type="ChEBI" id="CHEBI:15377"/>
        <dbReference type="ChEBI" id="CHEBI:15378"/>
        <dbReference type="ChEBI" id="CHEBI:29985"/>
        <dbReference type="ChEBI" id="CHEBI:30616"/>
        <dbReference type="ChEBI" id="CHEBI:37563"/>
        <dbReference type="ChEBI" id="CHEBI:43474"/>
        <dbReference type="ChEBI" id="CHEBI:46398"/>
        <dbReference type="ChEBI" id="CHEBI:58359"/>
        <dbReference type="ChEBI" id="CHEBI:456216"/>
        <dbReference type="EC" id="6.3.4.2"/>
    </reaction>
</comment>
<comment type="catalytic activity">
    <reaction evidence="1">
        <text>L-glutamine + H2O = L-glutamate + NH4(+)</text>
        <dbReference type="Rhea" id="RHEA:15889"/>
        <dbReference type="ChEBI" id="CHEBI:15377"/>
        <dbReference type="ChEBI" id="CHEBI:28938"/>
        <dbReference type="ChEBI" id="CHEBI:29985"/>
        <dbReference type="ChEBI" id="CHEBI:58359"/>
    </reaction>
</comment>
<comment type="catalytic activity">
    <reaction evidence="1">
        <text>UTP + NH4(+) + ATP = CTP + ADP + phosphate + 2 H(+)</text>
        <dbReference type="Rhea" id="RHEA:16597"/>
        <dbReference type="ChEBI" id="CHEBI:15378"/>
        <dbReference type="ChEBI" id="CHEBI:28938"/>
        <dbReference type="ChEBI" id="CHEBI:30616"/>
        <dbReference type="ChEBI" id="CHEBI:37563"/>
        <dbReference type="ChEBI" id="CHEBI:43474"/>
        <dbReference type="ChEBI" id="CHEBI:46398"/>
        <dbReference type="ChEBI" id="CHEBI:456216"/>
    </reaction>
</comment>
<comment type="activity regulation">
    <text evidence="1">Allosterically activated by GTP, when glutamine is the substrate; GTP has no effect on the reaction when ammonia is the substrate. The allosteric effector GTP functions by stabilizing the protein conformation that binds the tetrahedral intermediate(s) formed during glutamine hydrolysis. Inhibited by the product CTP, via allosteric rather than competitive inhibition.</text>
</comment>
<comment type="pathway">
    <text evidence="1">Pyrimidine metabolism; CTP biosynthesis via de novo pathway; CTP from UDP: step 2/2.</text>
</comment>
<comment type="subunit">
    <text evidence="1">Homotetramer.</text>
</comment>
<comment type="miscellaneous">
    <text evidence="1">CTPSs have evolved a hybrid strategy for distinguishing between UTP and CTP. The overlapping regions of the product feedback inhibitory and substrate sites recognize a common feature in both compounds, the triphosphate moiety. To differentiate isosteric substrate and product pyrimidine rings, an additional pocket far from the expected kinase/ligase catalytic site, specifically recognizes the cytosine and ribose portions of the product inhibitor.</text>
</comment>
<comment type="similarity">
    <text evidence="1">Belongs to the CTP synthase family.</text>
</comment>
<dbReference type="EC" id="6.3.4.2" evidence="1"/>
<dbReference type="EMBL" id="BX571862">
    <property type="protein sequence ID" value="CAE13207.1"/>
    <property type="molecule type" value="Genomic_DNA"/>
</dbReference>
<dbReference type="RefSeq" id="WP_011145277.1">
    <property type="nucleotide sequence ID" value="NC_005126.1"/>
</dbReference>
<dbReference type="SMR" id="Q7N836"/>
<dbReference type="STRING" id="243265.plu0912"/>
<dbReference type="GeneID" id="48847202"/>
<dbReference type="KEGG" id="plu:plu0912"/>
<dbReference type="eggNOG" id="COG0504">
    <property type="taxonomic scope" value="Bacteria"/>
</dbReference>
<dbReference type="HOGENOM" id="CLU_011675_5_0_6"/>
<dbReference type="OrthoDB" id="9801107at2"/>
<dbReference type="UniPathway" id="UPA00159">
    <property type="reaction ID" value="UER00277"/>
</dbReference>
<dbReference type="Proteomes" id="UP000002514">
    <property type="component" value="Chromosome"/>
</dbReference>
<dbReference type="GO" id="GO:0005829">
    <property type="term" value="C:cytosol"/>
    <property type="evidence" value="ECO:0007669"/>
    <property type="project" value="TreeGrafter"/>
</dbReference>
<dbReference type="GO" id="GO:0005524">
    <property type="term" value="F:ATP binding"/>
    <property type="evidence" value="ECO:0007669"/>
    <property type="project" value="UniProtKB-KW"/>
</dbReference>
<dbReference type="GO" id="GO:0003883">
    <property type="term" value="F:CTP synthase activity"/>
    <property type="evidence" value="ECO:0007669"/>
    <property type="project" value="UniProtKB-UniRule"/>
</dbReference>
<dbReference type="GO" id="GO:0004359">
    <property type="term" value="F:glutaminase activity"/>
    <property type="evidence" value="ECO:0007669"/>
    <property type="project" value="RHEA"/>
</dbReference>
<dbReference type="GO" id="GO:0042802">
    <property type="term" value="F:identical protein binding"/>
    <property type="evidence" value="ECO:0007669"/>
    <property type="project" value="TreeGrafter"/>
</dbReference>
<dbReference type="GO" id="GO:0046872">
    <property type="term" value="F:metal ion binding"/>
    <property type="evidence" value="ECO:0007669"/>
    <property type="project" value="UniProtKB-KW"/>
</dbReference>
<dbReference type="GO" id="GO:0044210">
    <property type="term" value="P:'de novo' CTP biosynthetic process"/>
    <property type="evidence" value="ECO:0007669"/>
    <property type="project" value="UniProtKB-UniRule"/>
</dbReference>
<dbReference type="GO" id="GO:0019856">
    <property type="term" value="P:pyrimidine nucleobase biosynthetic process"/>
    <property type="evidence" value="ECO:0007669"/>
    <property type="project" value="TreeGrafter"/>
</dbReference>
<dbReference type="CDD" id="cd03113">
    <property type="entry name" value="CTPS_N"/>
    <property type="match status" value="1"/>
</dbReference>
<dbReference type="CDD" id="cd01746">
    <property type="entry name" value="GATase1_CTP_Synthase"/>
    <property type="match status" value="1"/>
</dbReference>
<dbReference type="FunFam" id="3.40.50.300:FF:000009">
    <property type="entry name" value="CTP synthase"/>
    <property type="match status" value="1"/>
</dbReference>
<dbReference type="FunFam" id="3.40.50.880:FF:000002">
    <property type="entry name" value="CTP synthase"/>
    <property type="match status" value="1"/>
</dbReference>
<dbReference type="Gene3D" id="3.40.50.880">
    <property type="match status" value="1"/>
</dbReference>
<dbReference type="Gene3D" id="3.40.50.300">
    <property type="entry name" value="P-loop containing nucleotide triphosphate hydrolases"/>
    <property type="match status" value="1"/>
</dbReference>
<dbReference type="HAMAP" id="MF_01227">
    <property type="entry name" value="PyrG"/>
    <property type="match status" value="1"/>
</dbReference>
<dbReference type="InterPro" id="IPR029062">
    <property type="entry name" value="Class_I_gatase-like"/>
</dbReference>
<dbReference type="InterPro" id="IPR004468">
    <property type="entry name" value="CTP_synthase"/>
</dbReference>
<dbReference type="InterPro" id="IPR017456">
    <property type="entry name" value="CTP_synthase_N"/>
</dbReference>
<dbReference type="InterPro" id="IPR017926">
    <property type="entry name" value="GATASE"/>
</dbReference>
<dbReference type="InterPro" id="IPR033828">
    <property type="entry name" value="GATase1_CTP_Synthase"/>
</dbReference>
<dbReference type="InterPro" id="IPR027417">
    <property type="entry name" value="P-loop_NTPase"/>
</dbReference>
<dbReference type="NCBIfam" id="NF003792">
    <property type="entry name" value="PRK05380.1"/>
    <property type="match status" value="1"/>
</dbReference>
<dbReference type="NCBIfam" id="TIGR00337">
    <property type="entry name" value="PyrG"/>
    <property type="match status" value="1"/>
</dbReference>
<dbReference type="PANTHER" id="PTHR11550">
    <property type="entry name" value="CTP SYNTHASE"/>
    <property type="match status" value="1"/>
</dbReference>
<dbReference type="PANTHER" id="PTHR11550:SF0">
    <property type="entry name" value="CTP SYNTHASE-RELATED"/>
    <property type="match status" value="1"/>
</dbReference>
<dbReference type="Pfam" id="PF06418">
    <property type="entry name" value="CTP_synth_N"/>
    <property type="match status" value="1"/>
</dbReference>
<dbReference type="Pfam" id="PF00117">
    <property type="entry name" value="GATase"/>
    <property type="match status" value="1"/>
</dbReference>
<dbReference type="SUPFAM" id="SSF52317">
    <property type="entry name" value="Class I glutamine amidotransferase-like"/>
    <property type="match status" value="1"/>
</dbReference>
<dbReference type="SUPFAM" id="SSF52540">
    <property type="entry name" value="P-loop containing nucleoside triphosphate hydrolases"/>
    <property type="match status" value="1"/>
</dbReference>
<dbReference type="PROSITE" id="PS51273">
    <property type="entry name" value="GATASE_TYPE_1"/>
    <property type="match status" value="1"/>
</dbReference>
<reference key="1">
    <citation type="journal article" date="2003" name="Nat. Biotechnol.">
        <title>The genome sequence of the entomopathogenic bacterium Photorhabdus luminescens.</title>
        <authorList>
            <person name="Duchaud E."/>
            <person name="Rusniok C."/>
            <person name="Frangeul L."/>
            <person name="Buchrieser C."/>
            <person name="Givaudan A."/>
            <person name="Taourit S."/>
            <person name="Bocs S."/>
            <person name="Boursaux-Eude C."/>
            <person name="Chandler M."/>
            <person name="Charles J.-F."/>
            <person name="Dassa E."/>
            <person name="Derose R."/>
            <person name="Derzelle S."/>
            <person name="Freyssinet G."/>
            <person name="Gaudriault S."/>
            <person name="Medigue C."/>
            <person name="Lanois A."/>
            <person name="Powell K."/>
            <person name="Siguier P."/>
            <person name="Vincent R."/>
            <person name="Wingate V."/>
            <person name="Zouine M."/>
            <person name="Glaser P."/>
            <person name="Boemare N."/>
            <person name="Danchin A."/>
            <person name="Kunst F."/>
        </authorList>
    </citation>
    <scope>NUCLEOTIDE SEQUENCE [LARGE SCALE GENOMIC DNA]</scope>
    <source>
        <strain>DSM 15139 / CIP 105565 / TT01</strain>
    </source>
</reference>
<proteinExistence type="inferred from homology"/>